<protein>
    <recommendedName>
        <fullName evidence="1">tRNA-2-methylthio-N(6)-dimethylallyladenosine synthase</fullName>
        <ecNumber evidence="1">2.8.4.3</ecNumber>
    </recommendedName>
    <alternativeName>
        <fullName evidence="1">(Dimethylallyl)adenosine tRNA methylthiotransferase MiaB</fullName>
    </alternativeName>
    <alternativeName>
        <fullName evidence="1">tRNA-i(6)A37 methylthiotransferase</fullName>
    </alternativeName>
</protein>
<feature type="chain" id="PRO_0000374187" description="tRNA-2-methylthio-N(6)-dimethylallyladenosine synthase">
    <location>
        <begin position="1"/>
        <end position="457"/>
    </location>
</feature>
<feature type="domain" description="MTTase N-terminal" evidence="1">
    <location>
        <begin position="3"/>
        <end position="120"/>
    </location>
</feature>
<feature type="domain" description="Radical SAM core" evidence="2">
    <location>
        <begin position="143"/>
        <end position="377"/>
    </location>
</feature>
<feature type="domain" description="TRAM" evidence="1">
    <location>
        <begin position="380"/>
        <end position="447"/>
    </location>
</feature>
<feature type="binding site" evidence="1">
    <location>
        <position position="12"/>
    </location>
    <ligand>
        <name>[4Fe-4S] cluster</name>
        <dbReference type="ChEBI" id="CHEBI:49883"/>
        <label>1</label>
    </ligand>
</feature>
<feature type="binding site" evidence="1">
    <location>
        <position position="49"/>
    </location>
    <ligand>
        <name>[4Fe-4S] cluster</name>
        <dbReference type="ChEBI" id="CHEBI:49883"/>
        <label>1</label>
    </ligand>
</feature>
<feature type="binding site" evidence="1">
    <location>
        <position position="83"/>
    </location>
    <ligand>
        <name>[4Fe-4S] cluster</name>
        <dbReference type="ChEBI" id="CHEBI:49883"/>
        <label>1</label>
    </ligand>
</feature>
<feature type="binding site" evidence="1">
    <location>
        <position position="157"/>
    </location>
    <ligand>
        <name>[4Fe-4S] cluster</name>
        <dbReference type="ChEBI" id="CHEBI:49883"/>
        <label>2</label>
        <note>4Fe-4S-S-AdoMet</note>
    </ligand>
</feature>
<feature type="binding site" evidence="1">
    <location>
        <position position="161"/>
    </location>
    <ligand>
        <name>[4Fe-4S] cluster</name>
        <dbReference type="ChEBI" id="CHEBI:49883"/>
        <label>2</label>
        <note>4Fe-4S-S-AdoMet</note>
    </ligand>
</feature>
<feature type="binding site" evidence="1">
    <location>
        <position position="164"/>
    </location>
    <ligand>
        <name>[4Fe-4S] cluster</name>
        <dbReference type="ChEBI" id="CHEBI:49883"/>
        <label>2</label>
        <note>4Fe-4S-S-AdoMet</note>
    </ligand>
</feature>
<name>MIAB_BURP1</name>
<dbReference type="EC" id="2.8.4.3" evidence="1"/>
<dbReference type="EMBL" id="CP000124">
    <property type="protein sequence ID" value="ABA48036.1"/>
    <property type="molecule type" value="Genomic_DNA"/>
</dbReference>
<dbReference type="RefSeq" id="WP_004526139.1">
    <property type="nucleotide sequence ID" value="NC_007434.1"/>
</dbReference>
<dbReference type="SMR" id="Q3JVV1"/>
<dbReference type="EnsemblBacteria" id="ABA48036">
    <property type="protein sequence ID" value="ABA48036"/>
    <property type="gene ID" value="BURPS1710b_0889"/>
</dbReference>
<dbReference type="KEGG" id="bpm:BURPS1710b_0889"/>
<dbReference type="HOGENOM" id="CLU_018697_2_0_4"/>
<dbReference type="Proteomes" id="UP000002700">
    <property type="component" value="Chromosome I"/>
</dbReference>
<dbReference type="GO" id="GO:0005829">
    <property type="term" value="C:cytosol"/>
    <property type="evidence" value="ECO:0007669"/>
    <property type="project" value="TreeGrafter"/>
</dbReference>
<dbReference type="GO" id="GO:0051539">
    <property type="term" value="F:4 iron, 4 sulfur cluster binding"/>
    <property type="evidence" value="ECO:0007669"/>
    <property type="project" value="UniProtKB-UniRule"/>
</dbReference>
<dbReference type="GO" id="GO:0046872">
    <property type="term" value="F:metal ion binding"/>
    <property type="evidence" value="ECO:0007669"/>
    <property type="project" value="UniProtKB-KW"/>
</dbReference>
<dbReference type="GO" id="GO:0035597">
    <property type="term" value="F:N6-isopentenyladenosine methylthiotransferase activity"/>
    <property type="evidence" value="ECO:0007669"/>
    <property type="project" value="TreeGrafter"/>
</dbReference>
<dbReference type="CDD" id="cd01335">
    <property type="entry name" value="Radical_SAM"/>
    <property type="match status" value="1"/>
</dbReference>
<dbReference type="FunFam" id="3.40.50.12160:FF:000001">
    <property type="entry name" value="tRNA-2-methylthio-N(6)-dimethylallyladenosine synthase"/>
    <property type="match status" value="1"/>
</dbReference>
<dbReference type="FunFam" id="3.80.30.20:FF:000001">
    <property type="entry name" value="tRNA-2-methylthio-N(6)-dimethylallyladenosine synthase 2"/>
    <property type="match status" value="1"/>
</dbReference>
<dbReference type="Gene3D" id="3.40.50.12160">
    <property type="entry name" value="Methylthiotransferase, N-terminal domain"/>
    <property type="match status" value="1"/>
</dbReference>
<dbReference type="Gene3D" id="3.80.30.20">
    <property type="entry name" value="tm_1862 like domain"/>
    <property type="match status" value="1"/>
</dbReference>
<dbReference type="HAMAP" id="MF_01864">
    <property type="entry name" value="tRNA_metthiotr_MiaB"/>
    <property type="match status" value="1"/>
</dbReference>
<dbReference type="InterPro" id="IPR006638">
    <property type="entry name" value="Elp3/MiaA/NifB-like_rSAM"/>
</dbReference>
<dbReference type="InterPro" id="IPR005839">
    <property type="entry name" value="Methylthiotransferase"/>
</dbReference>
<dbReference type="InterPro" id="IPR020612">
    <property type="entry name" value="Methylthiotransferase_CS"/>
</dbReference>
<dbReference type="InterPro" id="IPR013848">
    <property type="entry name" value="Methylthiotransferase_N"/>
</dbReference>
<dbReference type="InterPro" id="IPR038135">
    <property type="entry name" value="Methylthiotransferase_N_sf"/>
</dbReference>
<dbReference type="InterPro" id="IPR006463">
    <property type="entry name" value="MiaB_methiolase"/>
</dbReference>
<dbReference type="InterPro" id="IPR007197">
    <property type="entry name" value="rSAM"/>
</dbReference>
<dbReference type="InterPro" id="IPR023404">
    <property type="entry name" value="rSAM_horseshoe"/>
</dbReference>
<dbReference type="InterPro" id="IPR002792">
    <property type="entry name" value="TRAM_dom"/>
</dbReference>
<dbReference type="NCBIfam" id="TIGR01574">
    <property type="entry name" value="miaB-methiolase"/>
    <property type="match status" value="1"/>
</dbReference>
<dbReference type="NCBIfam" id="TIGR00089">
    <property type="entry name" value="MiaB/RimO family radical SAM methylthiotransferase"/>
    <property type="match status" value="1"/>
</dbReference>
<dbReference type="PANTHER" id="PTHR43020">
    <property type="entry name" value="CDK5 REGULATORY SUBUNIT-ASSOCIATED PROTEIN 1"/>
    <property type="match status" value="1"/>
</dbReference>
<dbReference type="PANTHER" id="PTHR43020:SF2">
    <property type="entry name" value="MITOCHONDRIAL TRNA METHYLTHIOTRANSFERASE CDK5RAP1"/>
    <property type="match status" value="1"/>
</dbReference>
<dbReference type="Pfam" id="PF04055">
    <property type="entry name" value="Radical_SAM"/>
    <property type="match status" value="1"/>
</dbReference>
<dbReference type="Pfam" id="PF01938">
    <property type="entry name" value="TRAM"/>
    <property type="match status" value="1"/>
</dbReference>
<dbReference type="Pfam" id="PF00919">
    <property type="entry name" value="UPF0004"/>
    <property type="match status" value="1"/>
</dbReference>
<dbReference type="SFLD" id="SFLDF00273">
    <property type="entry name" value="(dimethylallyl)adenosine_tRNA"/>
    <property type="match status" value="1"/>
</dbReference>
<dbReference type="SFLD" id="SFLDG01082">
    <property type="entry name" value="B12-binding_domain_containing"/>
    <property type="match status" value="1"/>
</dbReference>
<dbReference type="SFLD" id="SFLDG01061">
    <property type="entry name" value="methylthiotransferase"/>
    <property type="match status" value="1"/>
</dbReference>
<dbReference type="SMART" id="SM00729">
    <property type="entry name" value="Elp3"/>
    <property type="match status" value="1"/>
</dbReference>
<dbReference type="SUPFAM" id="SSF102114">
    <property type="entry name" value="Radical SAM enzymes"/>
    <property type="match status" value="1"/>
</dbReference>
<dbReference type="PROSITE" id="PS51449">
    <property type="entry name" value="MTTASE_N"/>
    <property type="match status" value="1"/>
</dbReference>
<dbReference type="PROSITE" id="PS01278">
    <property type="entry name" value="MTTASE_RADICAL"/>
    <property type="match status" value="1"/>
</dbReference>
<dbReference type="PROSITE" id="PS51918">
    <property type="entry name" value="RADICAL_SAM"/>
    <property type="match status" value="1"/>
</dbReference>
<dbReference type="PROSITE" id="PS50926">
    <property type="entry name" value="TRAM"/>
    <property type="match status" value="1"/>
</dbReference>
<proteinExistence type="inferred from homology"/>
<sequence length="457" mass="50511">MTKKVYVKTFGCQMNEYDSDKMVDVLNAAEGLEKTDTPEDADIILFNTCSVREKAQEKVFSDLGRVRELKEAKPDLLIGVGGCVASQEGASIVARAPYVDLVFGPQTLHRLPQMIDARRESGRAQVDITFPEIEKFDHLPPARVEGPSAFVSIMEGCSKYCSYCVVPYTRGDEVSRPLDDVLTEVAGLADQGVREVTLLGQNVNAYRGAIAAGSAEIADFATLIEYVADIPGIERIRYTTSHPKEFTQRLLDVYAKVPKLVDHLHLPVQHGSDRILMAMKRGYTVLEYKSVIRKLRAIRPNLSLSTNIIVGFPGETDADFDKTMALVHEMSYDTSFSFIYSPRPGTPAANLADDTPRELKLKRLQHLQATIEENVARISQSMLGKVERILVEGPSRKDPNELAGRTENNRVVNFPAPSAAHPRLIGQMIDVKINHAYPHSLRGELVLAHGDASAATH</sequence>
<gene>
    <name evidence="1" type="primary">miaB</name>
    <name type="ordered locus">BURPS1710b_0889</name>
</gene>
<comment type="function">
    <text evidence="1">Catalyzes the methylthiolation of N6-(dimethylallyl)adenosine (i(6)A), leading to the formation of 2-methylthio-N6-(dimethylallyl)adenosine (ms(2)i(6)A) at position 37 in tRNAs that read codons beginning with uridine.</text>
</comment>
<comment type="catalytic activity">
    <reaction evidence="1">
        <text>N(6)-dimethylallyladenosine(37) in tRNA + (sulfur carrier)-SH + AH2 + 2 S-adenosyl-L-methionine = 2-methylsulfanyl-N(6)-dimethylallyladenosine(37) in tRNA + (sulfur carrier)-H + 5'-deoxyadenosine + L-methionine + A + S-adenosyl-L-homocysteine + 2 H(+)</text>
        <dbReference type="Rhea" id="RHEA:37067"/>
        <dbReference type="Rhea" id="RHEA-COMP:10375"/>
        <dbReference type="Rhea" id="RHEA-COMP:10376"/>
        <dbReference type="Rhea" id="RHEA-COMP:14737"/>
        <dbReference type="Rhea" id="RHEA-COMP:14739"/>
        <dbReference type="ChEBI" id="CHEBI:13193"/>
        <dbReference type="ChEBI" id="CHEBI:15378"/>
        <dbReference type="ChEBI" id="CHEBI:17319"/>
        <dbReference type="ChEBI" id="CHEBI:17499"/>
        <dbReference type="ChEBI" id="CHEBI:29917"/>
        <dbReference type="ChEBI" id="CHEBI:57844"/>
        <dbReference type="ChEBI" id="CHEBI:57856"/>
        <dbReference type="ChEBI" id="CHEBI:59789"/>
        <dbReference type="ChEBI" id="CHEBI:64428"/>
        <dbReference type="ChEBI" id="CHEBI:74415"/>
        <dbReference type="ChEBI" id="CHEBI:74417"/>
        <dbReference type="EC" id="2.8.4.3"/>
    </reaction>
</comment>
<comment type="cofactor">
    <cofactor evidence="1">
        <name>[4Fe-4S] cluster</name>
        <dbReference type="ChEBI" id="CHEBI:49883"/>
    </cofactor>
    <text evidence="1">Binds 2 [4Fe-4S] clusters. One cluster is coordinated with 3 cysteines and an exchangeable S-adenosyl-L-methionine.</text>
</comment>
<comment type="subunit">
    <text evidence="1">Monomer.</text>
</comment>
<comment type="subcellular location">
    <subcellularLocation>
        <location evidence="1">Cytoplasm</location>
    </subcellularLocation>
</comment>
<comment type="similarity">
    <text evidence="1">Belongs to the methylthiotransferase family. MiaB subfamily.</text>
</comment>
<evidence type="ECO:0000255" key="1">
    <source>
        <dbReference type="HAMAP-Rule" id="MF_01864"/>
    </source>
</evidence>
<evidence type="ECO:0000255" key="2">
    <source>
        <dbReference type="PROSITE-ProRule" id="PRU01266"/>
    </source>
</evidence>
<organism>
    <name type="scientific">Burkholderia pseudomallei (strain 1710b)</name>
    <dbReference type="NCBI Taxonomy" id="320372"/>
    <lineage>
        <taxon>Bacteria</taxon>
        <taxon>Pseudomonadati</taxon>
        <taxon>Pseudomonadota</taxon>
        <taxon>Betaproteobacteria</taxon>
        <taxon>Burkholderiales</taxon>
        <taxon>Burkholderiaceae</taxon>
        <taxon>Burkholderia</taxon>
        <taxon>pseudomallei group</taxon>
    </lineage>
</organism>
<reference key="1">
    <citation type="journal article" date="2010" name="Genome Biol. Evol.">
        <title>Continuing evolution of Burkholderia mallei through genome reduction and large-scale rearrangements.</title>
        <authorList>
            <person name="Losada L."/>
            <person name="Ronning C.M."/>
            <person name="DeShazer D."/>
            <person name="Woods D."/>
            <person name="Fedorova N."/>
            <person name="Kim H.S."/>
            <person name="Shabalina S.A."/>
            <person name="Pearson T.R."/>
            <person name="Brinkac L."/>
            <person name="Tan P."/>
            <person name="Nandi T."/>
            <person name="Crabtree J."/>
            <person name="Badger J."/>
            <person name="Beckstrom-Sternberg S."/>
            <person name="Saqib M."/>
            <person name="Schutzer S.E."/>
            <person name="Keim P."/>
            <person name="Nierman W.C."/>
        </authorList>
    </citation>
    <scope>NUCLEOTIDE SEQUENCE [LARGE SCALE GENOMIC DNA]</scope>
    <source>
        <strain>1710b</strain>
    </source>
</reference>
<accession>Q3JVV1</accession>
<keyword id="KW-0004">4Fe-4S</keyword>
<keyword id="KW-0963">Cytoplasm</keyword>
<keyword id="KW-0408">Iron</keyword>
<keyword id="KW-0411">Iron-sulfur</keyword>
<keyword id="KW-0479">Metal-binding</keyword>
<keyword id="KW-0949">S-adenosyl-L-methionine</keyword>
<keyword id="KW-0808">Transferase</keyword>
<keyword id="KW-0819">tRNA processing</keyword>